<name>MURA_PROMH</name>
<evidence type="ECO:0000255" key="1">
    <source>
        <dbReference type="HAMAP-Rule" id="MF_00111"/>
    </source>
</evidence>
<gene>
    <name evidence="1" type="primary">murA</name>
    <name type="ordered locus">PMI3661</name>
</gene>
<protein>
    <recommendedName>
        <fullName evidence="1">UDP-N-acetylglucosamine 1-carboxyvinyltransferase</fullName>
        <ecNumber evidence="1">2.5.1.7</ecNumber>
    </recommendedName>
    <alternativeName>
        <fullName evidence="1">Enoylpyruvate transferase</fullName>
    </alternativeName>
    <alternativeName>
        <fullName evidence="1">UDP-N-acetylglucosamine enolpyruvyl transferase</fullName>
        <shortName evidence="1">EPT</shortName>
    </alternativeName>
</protein>
<sequence length="420" mass="44904">MDKFRVQGPTCLSGEVTISGAKNAALPILFAAILAEEPVELTNVPKLKDIDTTIKLLNRLGTKVERNGSVFVDARHINEFCAPYELVKTMRASIWALGPLVARFGRGQVSLPGGCAIGARPVDLHITGLEQLGAEITLDEGYVKARVDGRLKGAHIVMDKVSVGATITIMTAAVLAEGKTIIENAAREPEIEDTANFLNTLGAKISGAGTDSITIEGVERLGGGTYQILPDRIETGTFLVAAAVSRGRVVCRNAKPDTLDAVLAKLREAGADIETGEDWISLDMHGKRPKAVTLRTAPHPGFPTDMQAQFSLLNLVADGAGMITETIFENRFMHIPELIRMGAHAEIESNTVLCHGVDKLSGAQVMATDLRASASLVLAGCIAEGTTIVDRIYHIDRGYENIEAKLQGLGAKIERLHSND</sequence>
<dbReference type="EC" id="2.5.1.7" evidence="1"/>
<dbReference type="EMBL" id="AM942759">
    <property type="protein sequence ID" value="CAR47146.1"/>
    <property type="molecule type" value="Genomic_DNA"/>
</dbReference>
<dbReference type="RefSeq" id="WP_004245292.1">
    <property type="nucleotide sequence ID" value="NC_010554.1"/>
</dbReference>
<dbReference type="SMR" id="B4EXL1"/>
<dbReference type="EnsemblBacteria" id="CAR47146">
    <property type="protein sequence ID" value="CAR47146"/>
    <property type="gene ID" value="PMI3661"/>
</dbReference>
<dbReference type="GeneID" id="6801745"/>
<dbReference type="KEGG" id="pmr:PMI3661"/>
<dbReference type="eggNOG" id="COG0766">
    <property type="taxonomic scope" value="Bacteria"/>
</dbReference>
<dbReference type="HOGENOM" id="CLU_027387_0_0_6"/>
<dbReference type="UniPathway" id="UPA00219"/>
<dbReference type="Proteomes" id="UP000008319">
    <property type="component" value="Chromosome"/>
</dbReference>
<dbReference type="GO" id="GO:0005737">
    <property type="term" value="C:cytoplasm"/>
    <property type="evidence" value="ECO:0007669"/>
    <property type="project" value="UniProtKB-SubCell"/>
</dbReference>
<dbReference type="GO" id="GO:0008760">
    <property type="term" value="F:UDP-N-acetylglucosamine 1-carboxyvinyltransferase activity"/>
    <property type="evidence" value="ECO:0007669"/>
    <property type="project" value="UniProtKB-UniRule"/>
</dbReference>
<dbReference type="GO" id="GO:0051301">
    <property type="term" value="P:cell division"/>
    <property type="evidence" value="ECO:0007669"/>
    <property type="project" value="UniProtKB-KW"/>
</dbReference>
<dbReference type="GO" id="GO:0071555">
    <property type="term" value="P:cell wall organization"/>
    <property type="evidence" value="ECO:0007669"/>
    <property type="project" value="UniProtKB-KW"/>
</dbReference>
<dbReference type="GO" id="GO:0009252">
    <property type="term" value="P:peptidoglycan biosynthetic process"/>
    <property type="evidence" value="ECO:0007669"/>
    <property type="project" value="UniProtKB-UniRule"/>
</dbReference>
<dbReference type="GO" id="GO:0008360">
    <property type="term" value="P:regulation of cell shape"/>
    <property type="evidence" value="ECO:0007669"/>
    <property type="project" value="UniProtKB-KW"/>
</dbReference>
<dbReference type="GO" id="GO:0019277">
    <property type="term" value="P:UDP-N-acetylgalactosamine biosynthetic process"/>
    <property type="evidence" value="ECO:0007669"/>
    <property type="project" value="InterPro"/>
</dbReference>
<dbReference type="CDD" id="cd01555">
    <property type="entry name" value="UdpNAET"/>
    <property type="match status" value="1"/>
</dbReference>
<dbReference type="FunFam" id="3.65.10.10:FF:000002">
    <property type="entry name" value="UDP-N-acetylglucosamine 1-carboxyvinyltransferase"/>
    <property type="match status" value="1"/>
</dbReference>
<dbReference type="Gene3D" id="3.65.10.10">
    <property type="entry name" value="Enolpyruvate transferase domain"/>
    <property type="match status" value="2"/>
</dbReference>
<dbReference type="HAMAP" id="MF_00111">
    <property type="entry name" value="MurA"/>
    <property type="match status" value="1"/>
</dbReference>
<dbReference type="InterPro" id="IPR001986">
    <property type="entry name" value="Enolpyruvate_Tfrase_dom"/>
</dbReference>
<dbReference type="InterPro" id="IPR036968">
    <property type="entry name" value="Enolpyruvate_Tfrase_sf"/>
</dbReference>
<dbReference type="InterPro" id="IPR050068">
    <property type="entry name" value="MurA_subfamily"/>
</dbReference>
<dbReference type="InterPro" id="IPR013792">
    <property type="entry name" value="RNA3'P_cycl/enolpyr_Trfase_a/b"/>
</dbReference>
<dbReference type="InterPro" id="IPR005750">
    <property type="entry name" value="UDP_GlcNAc_COvinyl_MurA"/>
</dbReference>
<dbReference type="NCBIfam" id="TIGR01072">
    <property type="entry name" value="murA"/>
    <property type="match status" value="1"/>
</dbReference>
<dbReference type="NCBIfam" id="NF006873">
    <property type="entry name" value="PRK09369.1"/>
    <property type="match status" value="1"/>
</dbReference>
<dbReference type="PANTHER" id="PTHR43783">
    <property type="entry name" value="UDP-N-ACETYLGLUCOSAMINE 1-CARBOXYVINYLTRANSFERASE"/>
    <property type="match status" value="1"/>
</dbReference>
<dbReference type="PANTHER" id="PTHR43783:SF1">
    <property type="entry name" value="UDP-N-ACETYLGLUCOSAMINE 1-CARBOXYVINYLTRANSFERASE"/>
    <property type="match status" value="1"/>
</dbReference>
<dbReference type="Pfam" id="PF00275">
    <property type="entry name" value="EPSP_synthase"/>
    <property type="match status" value="1"/>
</dbReference>
<dbReference type="SUPFAM" id="SSF55205">
    <property type="entry name" value="EPT/RTPC-like"/>
    <property type="match status" value="1"/>
</dbReference>
<comment type="function">
    <text evidence="1">Cell wall formation. Adds enolpyruvyl to UDP-N-acetylglucosamine.</text>
</comment>
<comment type="catalytic activity">
    <reaction evidence="1">
        <text>phosphoenolpyruvate + UDP-N-acetyl-alpha-D-glucosamine = UDP-N-acetyl-3-O-(1-carboxyvinyl)-alpha-D-glucosamine + phosphate</text>
        <dbReference type="Rhea" id="RHEA:18681"/>
        <dbReference type="ChEBI" id="CHEBI:43474"/>
        <dbReference type="ChEBI" id="CHEBI:57705"/>
        <dbReference type="ChEBI" id="CHEBI:58702"/>
        <dbReference type="ChEBI" id="CHEBI:68483"/>
        <dbReference type="EC" id="2.5.1.7"/>
    </reaction>
</comment>
<comment type="pathway">
    <text evidence="1">Cell wall biogenesis; peptidoglycan biosynthesis.</text>
</comment>
<comment type="subcellular location">
    <subcellularLocation>
        <location evidence="1">Cytoplasm</location>
    </subcellularLocation>
</comment>
<comment type="similarity">
    <text evidence="1">Belongs to the EPSP synthase family. MurA subfamily.</text>
</comment>
<proteinExistence type="inferred from homology"/>
<accession>B4EXL1</accession>
<reference key="1">
    <citation type="journal article" date="2008" name="J. Bacteriol.">
        <title>Complete genome sequence of uropathogenic Proteus mirabilis, a master of both adherence and motility.</title>
        <authorList>
            <person name="Pearson M.M."/>
            <person name="Sebaihia M."/>
            <person name="Churcher C."/>
            <person name="Quail M.A."/>
            <person name="Seshasayee A.S."/>
            <person name="Luscombe N.M."/>
            <person name="Abdellah Z."/>
            <person name="Arrosmith C."/>
            <person name="Atkin B."/>
            <person name="Chillingworth T."/>
            <person name="Hauser H."/>
            <person name="Jagels K."/>
            <person name="Moule S."/>
            <person name="Mungall K."/>
            <person name="Norbertczak H."/>
            <person name="Rabbinowitsch E."/>
            <person name="Walker D."/>
            <person name="Whithead S."/>
            <person name="Thomson N.R."/>
            <person name="Rather P.N."/>
            <person name="Parkhill J."/>
            <person name="Mobley H.L.T."/>
        </authorList>
    </citation>
    <scope>NUCLEOTIDE SEQUENCE [LARGE SCALE GENOMIC DNA]</scope>
    <source>
        <strain>HI4320</strain>
    </source>
</reference>
<organism>
    <name type="scientific">Proteus mirabilis (strain HI4320)</name>
    <dbReference type="NCBI Taxonomy" id="529507"/>
    <lineage>
        <taxon>Bacteria</taxon>
        <taxon>Pseudomonadati</taxon>
        <taxon>Pseudomonadota</taxon>
        <taxon>Gammaproteobacteria</taxon>
        <taxon>Enterobacterales</taxon>
        <taxon>Morganellaceae</taxon>
        <taxon>Proteus</taxon>
    </lineage>
</organism>
<feature type="chain" id="PRO_1000094710" description="UDP-N-acetylglucosamine 1-carboxyvinyltransferase">
    <location>
        <begin position="1"/>
        <end position="420"/>
    </location>
</feature>
<feature type="active site" description="Proton donor" evidence="1">
    <location>
        <position position="115"/>
    </location>
</feature>
<feature type="binding site" evidence="1">
    <location>
        <begin position="22"/>
        <end position="23"/>
    </location>
    <ligand>
        <name>phosphoenolpyruvate</name>
        <dbReference type="ChEBI" id="CHEBI:58702"/>
    </ligand>
</feature>
<feature type="binding site" evidence="1">
    <location>
        <position position="91"/>
    </location>
    <ligand>
        <name>UDP-N-acetyl-alpha-D-glucosamine</name>
        <dbReference type="ChEBI" id="CHEBI:57705"/>
    </ligand>
</feature>
<feature type="binding site" evidence="1">
    <location>
        <begin position="120"/>
        <end position="124"/>
    </location>
    <ligand>
        <name>UDP-N-acetyl-alpha-D-glucosamine</name>
        <dbReference type="ChEBI" id="CHEBI:57705"/>
    </ligand>
</feature>
<feature type="binding site" evidence="1">
    <location>
        <begin position="160"/>
        <end position="163"/>
    </location>
    <ligand>
        <name>UDP-N-acetyl-alpha-D-glucosamine</name>
        <dbReference type="ChEBI" id="CHEBI:57705"/>
    </ligand>
</feature>
<feature type="binding site" evidence="1">
    <location>
        <position position="305"/>
    </location>
    <ligand>
        <name>UDP-N-acetyl-alpha-D-glucosamine</name>
        <dbReference type="ChEBI" id="CHEBI:57705"/>
    </ligand>
</feature>
<feature type="binding site" evidence="1">
    <location>
        <position position="327"/>
    </location>
    <ligand>
        <name>UDP-N-acetyl-alpha-D-glucosamine</name>
        <dbReference type="ChEBI" id="CHEBI:57705"/>
    </ligand>
</feature>
<feature type="modified residue" description="2-(S-cysteinyl)pyruvic acid O-phosphothioketal" evidence="1">
    <location>
        <position position="115"/>
    </location>
</feature>
<keyword id="KW-0131">Cell cycle</keyword>
<keyword id="KW-0132">Cell division</keyword>
<keyword id="KW-0133">Cell shape</keyword>
<keyword id="KW-0961">Cell wall biogenesis/degradation</keyword>
<keyword id="KW-0963">Cytoplasm</keyword>
<keyword id="KW-0573">Peptidoglycan synthesis</keyword>
<keyword id="KW-0670">Pyruvate</keyword>
<keyword id="KW-1185">Reference proteome</keyword>
<keyword id="KW-0808">Transferase</keyword>